<accession>Q1GVK1</accession>
<comment type="function">
    <text evidence="1">Na(+)/H(+) antiporter that extrudes sodium in exchange for external protons.</text>
</comment>
<comment type="catalytic activity">
    <reaction evidence="1">
        <text>Na(+)(in) + 2 H(+)(out) = Na(+)(out) + 2 H(+)(in)</text>
        <dbReference type="Rhea" id="RHEA:29251"/>
        <dbReference type="ChEBI" id="CHEBI:15378"/>
        <dbReference type="ChEBI" id="CHEBI:29101"/>
    </reaction>
    <physiologicalReaction direction="left-to-right" evidence="1">
        <dbReference type="Rhea" id="RHEA:29252"/>
    </physiologicalReaction>
</comment>
<comment type="subcellular location">
    <subcellularLocation>
        <location evidence="1">Cell inner membrane</location>
        <topology evidence="1">Multi-pass membrane protein</topology>
    </subcellularLocation>
</comment>
<comment type="similarity">
    <text evidence="1">Belongs to the NhaA Na(+)/H(+) (TC 2.A.33) antiporter family.</text>
</comment>
<gene>
    <name evidence="1" type="primary">nhaA</name>
    <name type="ordered locus">Sala_0600</name>
</gene>
<protein>
    <recommendedName>
        <fullName evidence="1">Na(+)/H(+) antiporter NhaA</fullName>
    </recommendedName>
    <alternativeName>
        <fullName evidence="1">Sodium/proton antiporter NhaA</fullName>
    </alternativeName>
</protein>
<organism>
    <name type="scientific">Sphingopyxis alaskensis (strain DSM 13593 / LMG 18877 / RB2256)</name>
    <name type="common">Sphingomonas alaskensis</name>
    <dbReference type="NCBI Taxonomy" id="317655"/>
    <lineage>
        <taxon>Bacteria</taxon>
        <taxon>Pseudomonadati</taxon>
        <taxon>Pseudomonadota</taxon>
        <taxon>Alphaproteobacteria</taxon>
        <taxon>Sphingomonadales</taxon>
        <taxon>Sphingomonadaceae</taxon>
        <taxon>Sphingopyxis</taxon>
    </lineage>
</organism>
<dbReference type="EMBL" id="CP000356">
    <property type="protein sequence ID" value="ABF52321.1"/>
    <property type="molecule type" value="Genomic_DNA"/>
</dbReference>
<dbReference type="RefSeq" id="WP_011540911.1">
    <property type="nucleotide sequence ID" value="NC_008048.1"/>
</dbReference>
<dbReference type="SMR" id="Q1GVK1"/>
<dbReference type="STRING" id="317655.Sala_0600"/>
<dbReference type="KEGG" id="sal:Sala_0600"/>
<dbReference type="eggNOG" id="COG3004">
    <property type="taxonomic scope" value="Bacteria"/>
</dbReference>
<dbReference type="HOGENOM" id="CLU_015803_1_2_5"/>
<dbReference type="OrthoDB" id="9808135at2"/>
<dbReference type="Proteomes" id="UP000006578">
    <property type="component" value="Chromosome"/>
</dbReference>
<dbReference type="GO" id="GO:0005886">
    <property type="term" value="C:plasma membrane"/>
    <property type="evidence" value="ECO:0007669"/>
    <property type="project" value="UniProtKB-SubCell"/>
</dbReference>
<dbReference type="GO" id="GO:0015385">
    <property type="term" value="F:sodium:proton antiporter activity"/>
    <property type="evidence" value="ECO:0007669"/>
    <property type="project" value="TreeGrafter"/>
</dbReference>
<dbReference type="GO" id="GO:0006885">
    <property type="term" value="P:regulation of pH"/>
    <property type="evidence" value="ECO:0007669"/>
    <property type="project" value="InterPro"/>
</dbReference>
<dbReference type="Gene3D" id="1.20.1530.10">
    <property type="entry name" value="Na+/H+ antiporter like domain"/>
    <property type="match status" value="1"/>
</dbReference>
<dbReference type="HAMAP" id="MF_01844">
    <property type="entry name" value="NhaA"/>
    <property type="match status" value="1"/>
</dbReference>
<dbReference type="InterPro" id="IPR023171">
    <property type="entry name" value="Na/H_antiporter_dom_sf"/>
</dbReference>
<dbReference type="InterPro" id="IPR004670">
    <property type="entry name" value="NhaA"/>
</dbReference>
<dbReference type="NCBIfam" id="TIGR00773">
    <property type="entry name" value="NhaA"/>
    <property type="match status" value="1"/>
</dbReference>
<dbReference type="NCBIfam" id="NF007111">
    <property type="entry name" value="PRK09560.1"/>
    <property type="match status" value="1"/>
</dbReference>
<dbReference type="NCBIfam" id="NF007112">
    <property type="entry name" value="PRK09561.1"/>
    <property type="match status" value="1"/>
</dbReference>
<dbReference type="PANTHER" id="PTHR30341:SF0">
    <property type="entry name" value="NA(+)_H(+) ANTIPORTER NHAA"/>
    <property type="match status" value="1"/>
</dbReference>
<dbReference type="PANTHER" id="PTHR30341">
    <property type="entry name" value="SODIUM ION/PROTON ANTIPORTER NHAA-RELATED"/>
    <property type="match status" value="1"/>
</dbReference>
<dbReference type="Pfam" id="PF06965">
    <property type="entry name" value="Na_H_antiport_1"/>
    <property type="match status" value="1"/>
</dbReference>
<proteinExistence type="inferred from homology"/>
<name>NHAA_SPHAL</name>
<evidence type="ECO:0000255" key="1">
    <source>
        <dbReference type="HAMAP-Rule" id="MF_01844"/>
    </source>
</evidence>
<reference key="1">
    <citation type="journal article" date="2009" name="Proc. Natl. Acad. Sci. U.S.A.">
        <title>The genomic basis of trophic strategy in marine bacteria.</title>
        <authorList>
            <person name="Lauro F.M."/>
            <person name="McDougald D."/>
            <person name="Thomas T."/>
            <person name="Williams T.J."/>
            <person name="Egan S."/>
            <person name="Rice S."/>
            <person name="DeMaere M.Z."/>
            <person name="Ting L."/>
            <person name="Ertan H."/>
            <person name="Johnson J."/>
            <person name="Ferriera S."/>
            <person name="Lapidus A."/>
            <person name="Anderson I."/>
            <person name="Kyrpides N."/>
            <person name="Munk A.C."/>
            <person name="Detter C."/>
            <person name="Han C.S."/>
            <person name="Brown M.V."/>
            <person name="Robb F.T."/>
            <person name="Kjelleberg S."/>
            <person name="Cavicchioli R."/>
        </authorList>
    </citation>
    <scope>NUCLEOTIDE SEQUENCE [LARGE SCALE GENOMIC DNA]</scope>
    <source>
        <strain>DSM 13593 / LMG 18877 / RB2256</strain>
    </source>
</reference>
<feature type="chain" id="PRO_0000334444" description="Na(+)/H(+) antiporter NhaA">
    <location>
        <begin position="1"/>
        <end position="424"/>
    </location>
</feature>
<feature type="transmembrane region" description="Helical" evidence="1">
    <location>
        <begin position="23"/>
        <end position="43"/>
    </location>
</feature>
<feature type="transmembrane region" description="Helical" evidence="1">
    <location>
        <begin position="65"/>
        <end position="85"/>
    </location>
</feature>
<feature type="transmembrane region" description="Helical" evidence="1">
    <location>
        <begin position="102"/>
        <end position="122"/>
    </location>
</feature>
<feature type="transmembrane region" description="Helical" evidence="1">
    <location>
        <begin position="131"/>
        <end position="151"/>
    </location>
</feature>
<feature type="transmembrane region" description="Helical" evidence="1">
    <location>
        <begin position="160"/>
        <end position="180"/>
    </location>
</feature>
<feature type="transmembrane region" description="Helical" evidence="1">
    <location>
        <begin position="183"/>
        <end position="203"/>
    </location>
</feature>
<feature type="transmembrane region" description="Helical" evidence="1">
    <location>
        <begin position="211"/>
        <end position="231"/>
    </location>
</feature>
<feature type="transmembrane region" description="Helical" evidence="1">
    <location>
        <begin position="265"/>
        <end position="285"/>
    </location>
</feature>
<feature type="transmembrane region" description="Helical" evidence="1">
    <location>
        <begin position="303"/>
        <end position="323"/>
    </location>
</feature>
<feature type="transmembrane region" description="Helical" evidence="1">
    <location>
        <begin position="341"/>
        <end position="361"/>
    </location>
</feature>
<feature type="transmembrane region" description="Helical" evidence="1">
    <location>
        <begin position="373"/>
        <end position="393"/>
    </location>
</feature>
<keyword id="KW-0050">Antiport</keyword>
<keyword id="KW-0997">Cell inner membrane</keyword>
<keyword id="KW-1003">Cell membrane</keyword>
<keyword id="KW-0406">Ion transport</keyword>
<keyword id="KW-0472">Membrane</keyword>
<keyword id="KW-1185">Reference proteome</keyword>
<keyword id="KW-0915">Sodium</keyword>
<keyword id="KW-0739">Sodium transport</keyword>
<keyword id="KW-0812">Transmembrane</keyword>
<keyword id="KW-1133">Transmembrane helix</keyword>
<keyword id="KW-0813">Transport</keyword>
<sequence length="424" mass="44573">MARSFPPPSALRDFLESESAGGILLIFAAILAMIVANSPLATLYHDLIHAVTGPVLTDKLGPMTVHLWINDGLMAVFFLLVGLEIKREFVDGRLASWDRRRLPFIAAAAGMAVPAALYMFFVGDEPGLAQGWAIPAATDIAFAMGVLALLGRRAPTSLKLFLVTVAIVDDMGAVAIIALFYTAKINLLALGAAAAILGIMFACNRGGVKNLLVYMALFLLLWYAMLLSGVHATIAGVLAAMAIPFERTPGAPDSQTSPLHRLEHALHPTVAFAIVPLFGFANAGVDVRALGLDQLFAPLPLGIAAGLFLGKQIGIFGSVWLAVKLGIAGRLRGATWLQVYAVSMLCGIGFTMSLFIGSLAFPGNALLIEEAKIGILMGSLASALVGFAVLRLAPLHPEHNAVESASKGEIAVDGDVRDTSEAAR</sequence>